<comment type="function">
    <text evidence="1">Probable transcription factor.</text>
</comment>
<comment type="subcellular location">
    <subcellularLocation>
        <location evidence="5">Nucleus</location>
    </subcellularLocation>
</comment>
<comment type="tissue specificity">
    <text evidence="4">Expressed in leaf blades and panicles.</text>
</comment>
<comment type="induction">
    <text evidence="4">Down-regulated in leaves by drought stress.</text>
</comment>
<comment type="similarity">
    <text evidence="5">Belongs to the HD-ZIP homeobox family. Class I subfamily.</text>
</comment>
<reference key="1">
    <citation type="journal article" date="2005" name="PLoS Biol.">
        <title>The genomes of Oryza sativa: a history of duplications.</title>
        <authorList>
            <person name="Yu J."/>
            <person name="Wang J."/>
            <person name="Lin W."/>
            <person name="Li S."/>
            <person name="Li H."/>
            <person name="Zhou J."/>
            <person name="Ni P."/>
            <person name="Dong W."/>
            <person name="Hu S."/>
            <person name="Zeng C."/>
            <person name="Zhang J."/>
            <person name="Zhang Y."/>
            <person name="Li R."/>
            <person name="Xu Z."/>
            <person name="Li S."/>
            <person name="Li X."/>
            <person name="Zheng H."/>
            <person name="Cong L."/>
            <person name="Lin L."/>
            <person name="Yin J."/>
            <person name="Geng J."/>
            <person name="Li G."/>
            <person name="Shi J."/>
            <person name="Liu J."/>
            <person name="Lv H."/>
            <person name="Li J."/>
            <person name="Wang J."/>
            <person name="Deng Y."/>
            <person name="Ran L."/>
            <person name="Shi X."/>
            <person name="Wang X."/>
            <person name="Wu Q."/>
            <person name="Li C."/>
            <person name="Ren X."/>
            <person name="Wang J."/>
            <person name="Wang X."/>
            <person name="Li D."/>
            <person name="Liu D."/>
            <person name="Zhang X."/>
            <person name="Ji Z."/>
            <person name="Zhao W."/>
            <person name="Sun Y."/>
            <person name="Zhang Z."/>
            <person name="Bao J."/>
            <person name="Han Y."/>
            <person name="Dong L."/>
            <person name="Ji J."/>
            <person name="Chen P."/>
            <person name="Wu S."/>
            <person name="Liu J."/>
            <person name="Xiao Y."/>
            <person name="Bu D."/>
            <person name="Tan J."/>
            <person name="Yang L."/>
            <person name="Ye C."/>
            <person name="Zhang J."/>
            <person name="Xu J."/>
            <person name="Zhou Y."/>
            <person name="Yu Y."/>
            <person name="Zhang B."/>
            <person name="Zhuang S."/>
            <person name="Wei H."/>
            <person name="Liu B."/>
            <person name="Lei M."/>
            <person name="Yu H."/>
            <person name="Li Y."/>
            <person name="Xu H."/>
            <person name="Wei S."/>
            <person name="He X."/>
            <person name="Fang L."/>
            <person name="Zhang Z."/>
            <person name="Zhang Y."/>
            <person name="Huang X."/>
            <person name="Su Z."/>
            <person name="Tong W."/>
            <person name="Li J."/>
            <person name="Tong Z."/>
            <person name="Li S."/>
            <person name="Ye J."/>
            <person name="Wang L."/>
            <person name="Fang L."/>
            <person name="Lei T."/>
            <person name="Chen C.-S."/>
            <person name="Chen H.-C."/>
            <person name="Xu Z."/>
            <person name="Li H."/>
            <person name="Huang H."/>
            <person name="Zhang F."/>
            <person name="Xu H."/>
            <person name="Li N."/>
            <person name="Zhao C."/>
            <person name="Li S."/>
            <person name="Dong L."/>
            <person name="Huang Y."/>
            <person name="Li L."/>
            <person name="Xi Y."/>
            <person name="Qi Q."/>
            <person name="Li W."/>
            <person name="Zhang B."/>
            <person name="Hu W."/>
            <person name="Zhang Y."/>
            <person name="Tian X."/>
            <person name="Jiao Y."/>
            <person name="Liang X."/>
            <person name="Jin J."/>
            <person name="Gao L."/>
            <person name="Zheng W."/>
            <person name="Hao B."/>
            <person name="Liu S.-M."/>
            <person name="Wang W."/>
            <person name="Yuan L."/>
            <person name="Cao M."/>
            <person name="McDermott J."/>
            <person name="Samudrala R."/>
            <person name="Wang J."/>
            <person name="Wong G.K.-S."/>
            <person name="Yang H."/>
        </authorList>
    </citation>
    <scope>NUCLEOTIDE SEQUENCE [LARGE SCALE GENOMIC DNA]</scope>
    <source>
        <strain>cv. 93-11</strain>
    </source>
</reference>
<reference key="2">
    <citation type="journal article" date="2008" name="Plant Mol. Biol.">
        <title>A genome-wide survey of HD-Zip genes in rice and analysis of drought-responsive family members.</title>
        <authorList>
            <person name="Agalou A."/>
            <person name="Purwantomo S."/>
            <person name="Oevernaes E."/>
            <person name="Johannesson H."/>
            <person name="Zhu X."/>
            <person name="Estiati A."/>
            <person name="de Kam R.J."/>
            <person name="Engstroem P."/>
            <person name="Slamet-Loedin I.H."/>
            <person name="Zhu Z."/>
            <person name="Wang M."/>
            <person name="Xiong L."/>
            <person name="Meijer A.H."/>
            <person name="Ouwerkerk P.B.F."/>
        </authorList>
    </citation>
    <scope>NUCLEOTIDE SEQUENCE [MRNA] OF 5-156</scope>
    <scope>TISSUE SPECIFICITY</scope>
    <scope>INDUCTION</scope>
    <scope>GENE FAMILY</scope>
    <scope>NOMENCLATURE</scope>
    <source>
        <strain>cv. Minghui 86</strain>
    </source>
</reference>
<accession>A2YWC0</accession>
<accession>A5JPV8</accession>
<sequence>MRSPAALLPVVADGGGGVGVEEEMDVDEDMAMCGGRGGGGGEKKRRLSVEQVRALERSFETENKLEPERKARLARDLGLQPRQVAVWFQNRRARWKTKQLERDYAALRQSYDALRADHDALRRDKDALLAEIKELKGKLGDEDAAASFSSVKEEEDPAASDADPPATGAPQGSSESDSSAVLNDAEILPHKPAPAAAADAAASEETEAVVTGAALLHHAEVFFHGQLLKVDDDEAAFLGDDGAACGGFFADEHLPSLPWWAEPTEQWTT</sequence>
<evidence type="ECO:0000250" key="1"/>
<evidence type="ECO:0000255" key="2">
    <source>
        <dbReference type="PROSITE-ProRule" id="PRU00108"/>
    </source>
</evidence>
<evidence type="ECO:0000256" key="3">
    <source>
        <dbReference type="SAM" id="MobiDB-lite"/>
    </source>
</evidence>
<evidence type="ECO:0000269" key="4">
    <source>
    </source>
</evidence>
<evidence type="ECO:0000305" key="5"/>
<keyword id="KW-0238">DNA-binding</keyword>
<keyword id="KW-0371">Homeobox</keyword>
<keyword id="KW-0539">Nucleus</keyword>
<keyword id="KW-1185">Reference proteome</keyword>
<keyword id="KW-0804">Transcription</keyword>
<keyword id="KW-0805">Transcription regulation</keyword>
<name>HOX20_ORYSI</name>
<feature type="chain" id="PRO_0000331712" description="Homeobox-leucine zipper protein HOX20">
    <location>
        <begin position="1"/>
        <end position="269"/>
    </location>
</feature>
<feature type="DNA-binding region" description="Homeobox" evidence="2">
    <location>
        <begin position="40"/>
        <end position="99"/>
    </location>
</feature>
<feature type="region of interest" description="Leucine-zipper">
    <location>
        <begin position="98"/>
        <end position="142"/>
    </location>
</feature>
<feature type="region of interest" description="Disordered" evidence="3">
    <location>
        <begin position="143"/>
        <end position="180"/>
    </location>
</feature>
<feature type="compositionally biased region" description="Polar residues" evidence="3">
    <location>
        <begin position="170"/>
        <end position="180"/>
    </location>
</feature>
<organism>
    <name type="scientific">Oryza sativa subsp. indica</name>
    <name type="common">Rice</name>
    <dbReference type="NCBI Taxonomy" id="39946"/>
    <lineage>
        <taxon>Eukaryota</taxon>
        <taxon>Viridiplantae</taxon>
        <taxon>Streptophyta</taxon>
        <taxon>Embryophyta</taxon>
        <taxon>Tracheophyta</taxon>
        <taxon>Spermatophyta</taxon>
        <taxon>Magnoliopsida</taxon>
        <taxon>Liliopsida</taxon>
        <taxon>Poales</taxon>
        <taxon>Poaceae</taxon>
        <taxon>BOP clade</taxon>
        <taxon>Oryzoideae</taxon>
        <taxon>Oryzeae</taxon>
        <taxon>Oryzinae</taxon>
        <taxon>Oryza</taxon>
        <taxon>Oryza sativa</taxon>
    </lineage>
</organism>
<proteinExistence type="evidence at transcript level"/>
<dbReference type="EMBL" id="CM000133">
    <property type="protein sequence ID" value="EAZ07381.1"/>
    <property type="molecule type" value="Genomic_DNA"/>
</dbReference>
<dbReference type="EMBL" id="EF555543">
    <property type="protein sequence ID" value="ABQ57284.1"/>
    <property type="molecule type" value="mRNA"/>
</dbReference>
<dbReference type="SMR" id="A2YWC0"/>
<dbReference type="EnsemblPlants" id="BGIOSGA026788-TA">
    <property type="protein sequence ID" value="BGIOSGA026788-PA"/>
    <property type="gene ID" value="BGIOSGA026788"/>
</dbReference>
<dbReference type="EnsemblPlants" id="OsGoSa_08g0018960.01">
    <property type="protein sequence ID" value="OsGoSa_08g0018960.01"/>
    <property type="gene ID" value="OsGoSa_08g0018960"/>
</dbReference>
<dbReference type="EnsemblPlants" id="OsIR64_08g0019540.01">
    <property type="protein sequence ID" value="OsIR64_08g0019540.01"/>
    <property type="gene ID" value="OsIR64_08g0019540"/>
</dbReference>
<dbReference type="EnsemblPlants" id="OsKYG_08g0019120.01">
    <property type="protein sequence ID" value="OsKYG_08g0019120.01"/>
    <property type="gene ID" value="OsKYG_08g0019120"/>
</dbReference>
<dbReference type="EnsemblPlants" id="OsLima_08g0018850.01">
    <property type="protein sequence ID" value="OsLima_08g0018850.01"/>
    <property type="gene ID" value="OsLima_08g0018850"/>
</dbReference>
<dbReference type="EnsemblPlants" id="OsLiXu_08g0019800.01">
    <property type="protein sequence ID" value="OsLiXu_08g0019800.01"/>
    <property type="gene ID" value="OsLiXu_08g0019800"/>
</dbReference>
<dbReference type="EnsemblPlants" id="OsMH63_08G019680_01">
    <property type="protein sequence ID" value="OsMH63_08G019680_01"/>
    <property type="gene ID" value="OsMH63_08G019680"/>
</dbReference>
<dbReference type="EnsemblPlants" id="OsPr106_08g0019620.01">
    <property type="protein sequence ID" value="OsPr106_08g0019620.01"/>
    <property type="gene ID" value="OsPr106_08g0019620"/>
</dbReference>
<dbReference type="EnsemblPlants" id="OsZS97_08G019560_01">
    <property type="protein sequence ID" value="OsZS97_08G019560_01"/>
    <property type="gene ID" value="OsZS97_08G019560"/>
</dbReference>
<dbReference type="Gramene" id="BGIOSGA026788-TA">
    <property type="protein sequence ID" value="BGIOSGA026788-PA"/>
    <property type="gene ID" value="BGIOSGA026788"/>
</dbReference>
<dbReference type="Gramene" id="OsGoSa_08g0018960.01">
    <property type="protein sequence ID" value="OsGoSa_08g0018960.01"/>
    <property type="gene ID" value="OsGoSa_08g0018960"/>
</dbReference>
<dbReference type="Gramene" id="OsIR64_08g0019540.01">
    <property type="protein sequence ID" value="OsIR64_08g0019540.01"/>
    <property type="gene ID" value="OsIR64_08g0019540"/>
</dbReference>
<dbReference type="Gramene" id="OsKYG_08g0019120.01">
    <property type="protein sequence ID" value="OsKYG_08g0019120.01"/>
    <property type="gene ID" value="OsKYG_08g0019120"/>
</dbReference>
<dbReference type="Gramene" id="OsLima_08g0018850.01">
    <property type="protein sequence ID" value="OsLima_08g0018850.01"/>
    <property type="gene ID" value="OsLima_08g0018850"/>
</dbReference>
<dbReference type="Gramene" id="OsLiXu_08g0019800.01">
    <property type="protein sequence ID" value="OsLiXu_08g0019800.01"/>
    <property type="gene ID" value="OsLiXu_08g0019800"/>
</dbReference>
<dbReference type="Gramene" id="OsMH63_08G019680_01">
    <property type="protein sequence ID" value="OsMH63_08G019680_01"/>
    <property type="gene ID" value="OsMH63_08G019680"/>
</dbReference>
<dbReference type="Gramene" id="OsPr106_08g0019620.01">
    <property type="protein sequence ID" value="OsPr106_08g0019620.01"/>
    <property type="gene ID" value="OsPr106_08g0019620"/>
</dbReference>
<dbReference type="Gramene" id="OsZS97_08G019560_01">
    <property type="protein sequence ID" value="OsZS97_08G019560_01"/>
    <property type="gene ID" value="OsZS97_08G019560"/>
</dbReference>
<dbReference type="HOGENOM" id="CLU_060842_1_0_1"/>
<dbReference type="OMA" id="MAPEKAH"/>
<dbReference type="OrthoDB" id="6159439at2759"/>
<dbReference type="Proteomes" id="UP000007015">
    <property type="component" value="Chromosome 8"/>
</dbReference>
<dbReference type="GO" id="GO:0005634">
    <property type="term" value="C:nucleus"/>
    <property type="evidence" value="ECO:0007669"/>
    <property type="project" value="UniProtKB-SubCell"/>
</dbReference>
<dbReference type="GO" id="GO:0000981">
    <property type="term" value="F:DNA-binding transcription factor activity, RNA polymerase II-specific"/>
    <property type="evidence" value="ECO:0007669"/>
    <property type="project" value="InterPro"/>
</dbReference>
<dbReference type="GO" id="GO:0043565">
    <property type="term" value="F:sequence-specific DNA binding"/>
    <property type="evidence" value="ECO:0007669"/>
    <property type="project" value="InterPro"/>
</dbReference>
<dbReference type="GO" id="GO:0045893">
    <property type="term" value="P:positive regulation of DNA-templated transcription"/>
    <property type="evidence" value="ECO:0007669"/>
    <property type="project" value="TreeGrafter"/>
</dbReference>
<dbReference type="CDD" id="cd00086">
    <property type="entry name" value="homeodomain"/>
    <property type="match status" value="1"/>
</dbReference>
<dbReference type="FunFam" id="1.10.10.60:FF:000242">
    <property type="entry name" value="Homeobox-leucine zipper protein HOX13"/>
    <property type="match status" value="1"/>
</dbReference>
<dbReference type="Gene3D" id="1.10.10.60">
    <property type="entry name" value="Homeodomain-like"/>
    <property type="match status" value="1"/>
</dbReference>
<dbReference type="InterPro" id="IPR001356">
    <property type="entry name" value="HD"/>
</dbReference>
<dbReference type="InterPro" id="IPR045224">
    <property type="entry name" value="HDZip_class_I_plant"/>
</dbReference>
<dbReference type="InterPro" id="IPR017970">
    <property type="entry name" value="Homeobox_CS"/>
</dbReference>
<dbReference type="InterPro" id="IPR009057">
    <property type="entry name" value="Homeodomain-like_sf"/>
</dbReference>
<dbReference type="InterPro" id="IPR000047">
    <property type="entry name" value="HTH_motif"/>
</dbReference>
<dbReference type="InterPro" id="IPR003106">
    <property type="entry name" value="Leu_zip_homeo"/>
</dbReference>
<dbReference type="PANTHER" id="PTHR24326">
    <property type="entry name" value="HOMEOBOX-LEUCINE ZIPPER PROTEIN"/>
    <property type="match status" value="1"/>
</dbReference>
<dbReference type="PANTHER" id="PTHR24326:SF624">
    <property type="entry name" value="HOMEOBOX-LEUCINE ZIPPER PROTEIN HOX20"/>
    <property type="match status" value="1"/>
</dbReference>
<dbReference type="Pfam" id="PF02183">
    <property type="entry name" value="HALZ"/>
    <property type="match status" value="1"/>
</dbReference>
<dbReference type="Pfam" id="PF00046">
    <property type="entry name" value="Homeodomain"/>
    <property type="match status" value="1"/>
</dbReference>
<dbReference type="PRINTS" id="PR00031">
    <property type="entry name" value="HTHREPRESSR"/>
</dbReference>
<dbReference type="SMART" id="SM00389">
    <property type="entry name" value="HOX"/>
    <property type="match status" value="1"/>
</dbReference>
<dbReference type="SUPFAM" id="SSF46689">
    <property type="entry name" value="Homeodomain-like"/>
    <property type="match status" value="1"/>
</dbReference>
<dbReference type="PROSITE" id="PS00027">
    <property type="entry name" value="HOMEOBOX_1"/>
    <property type="match status" value="1"/>
</dbReference>
<dbReference type="PROSITE" id="PS50071">
    <property type="entry name" value="HOMEOBOX_2"/>
    <property type="match status" value="1"/>
</dbReference>
<protein>
    <recommendedName>
        <fullName>Homeobox-leucine zipper protein HOX20</fullName>
    </recommendedName>
    <alternativeName>
        <fullName>HD-ZIP protein HOX20</fullName>
    </alternativeName>
    <alternativeName>
        <fullName>Homeodomain transcription factor HOX20</fullName>
    </alternativeName>
    <alternativeName>
        <fullName>OsHox20</fullName>
    </alternativeName>
</protein>
<gene>
    <name type="primary">HOX20</name>
    <name type="ORF">OsI_028613</name>
</gene>